<reference key="1">
    <citation type="journal article" date="1990" name="Eur. J. Biochem.">
        <title>Citrate synthase from the thermophilic archaebacterium Thermoplasma acidophilium. Cloning and sequencing of the gene.</title>
        <authorList>
            <person name="Sutherland K.J."/>
            <person name="Henneke C.M."/>
            <person name="Towner P."/>
            <person name="Hough D.W."/>
            <person name="Danson M.J."/>
        </authorList>
    </citation>
    <scope>NUCLEOTIDE SEQUENCE [GENOMIC DNA]</scope>
    <source>
        <strain>ATCC 25905 / DSM 1728 / JCM 9062 / NBRC 15155 / AMRC-C165</strain>
    </source>
</reference>
<reference key="2">
    <citation type="journal article" date="2000" name="Nature">
        <title>The genome sequence of the thermoacidophilic scavenger Thermoplasma acidophilum.</title>
        <authorList>
            <person name="Ruepp A."/>
            <person name="Graml W."/>
            <person name="Santos-Martinez M.-L."/>
            <person name="Koretke K.K."/>
            <person name="Volker C."/>
            <person name="Mewes H.-W."/>
            <person name="Frishman D."/>
            <person name="Stocker S."/>
            <person name="Lupas A.N."/>
            <person name="Baumeister W."/>
        </authorList>
    </citation>
    <scope>NUCLEOTIDE SEQUENCE [LARGE SCALE GENOMIC DNA]</scope>
    <source>
        <strain>ATCC 25905 / DSM 1728 / JCM 9062 / NBRC 15155 / AMRC-C165</strain>
    </source>
</reference>
<reference key="3">
    <citation type="journal article" date="1987" name="FEBS Lett.">
        <title>Citrate synthase from the thermophilic archaebacteria Thermoplasma acidophilum and Sulfolobus acidocaldarius.</title>
        <authorList>
            <person name="Smith L.D."/>
            <person name="Stevenson K.J."/>
            <person name="Hough D.W."/>
            <person name="Danson M.J."/>
        </authorList>
    </citation>
    <scope>PROTEIN SEQUENCE OF 2-17</scope>
</reference>
<reference key="4">
    <citation type="journal article" date="1994" name="Structure">
        <title>The crystal structure of citrate synthase from the thermophilic archaeon, Thermoplasma acidophilum.</title>
        <authorList>
            <person name="Russel R.J.M."/>
            <person name="Hough D.W."/>
            <person name="Danson M.J."/>
            <person name="Taylor G.L."/>
        </authorList>
    </citation>
    <scope>X-RAY CRYSTALLOGRAPHY (2.5 ANGSTROMS)</scope>
    <scope>ACTIVE SITE</scope>
</reference>
<sequence length="385" mass="43072">MPETEEISKGLEDVNIKWTRLTTIDGNKGILRYGGYSVEDIIASGAQDEEIQYLFLYGNLPTEQELRKYKETVQKGYKIPDFVINAIRQLPRESDAVAMQMAAVAAMAASETKFKWNKDTDRDVAAEMIGRMSAITVNVYRHIMNMPAELPKPSDSYAESFLNAAFGRKATKEEIDAMNTALILYTDHEVPASTTAGLVAVSTLSDMYSGITAALAALKGPLHGGAAEAAIAQFDEIKDPAMVEKWFNDNIINGKKRLMGFGHRVYKTYDPRAKIFKGIAEKLSSKKPEVHKVYEIATKLEDFGIKAFGSKGIYPNTDYFSGIVYMSIGFPLRNNIYTALFALSRVTGWQAHFIEYVEEQQRLIRPRAVYVGPAERKYVPIAERK</sequence>
<comment type="catalytic activity">
    <reaction evidence="1">
        <text>oxaloacetate + acetyl-CoA + H2O = citrate + CoA + H(+)</text>
        <dbReference type="Rhea" id="RHEA:16845"/>
        <dbReference type="ChEBI" id="CHEBI:15377"/>
        <dbReference type="ChEBI" id="CHEBI:15378"/>
        <dbReference type="ChEBI" id="CHEBI:16452"/>
        <dbReference type="ChEBI" id="CHEBI:16947"/>
        <dbReference type="ChEBI" id="CHEBI:57287"/>
        <dbReference type="ChEBI" id="CHEBI:57288"/>
        <dbReference type="EC" id="2.3.3.16"/>
    </reaction>
</comment>
<comment type="activity regulation">
    <text>Allosterically inhibited by NADH.</text>
</comment>
<comment type="pathway">
    <text>Carbohydrate metabolism; tricarboxylic acid cycle; isocitrate from oxaloacetate: step 1/2.</text>
</comment>
<comment type="subunit">
    <text>Homodimer.</text>
</comment>
<comment type="miscellaneous">
    <text>Citrate synthase is found in nearly all cells capable of oxidative metabolism.</text>
</comment>
<comment type="similarity">
    <text evidence="3">Belongs to the citrate synthase family.</text>
</comment>
<proteinExistence type="evidence at protein level"/>
<keyword id="KW-0002">3D-structure</keyword>
<keyword id="KW-0021">Allosteric enzyme</keyword>
<keyword id="KW-0903">Direct protein sequencing</keyword>
<keyword id="KW-1185">Reference proteome</keyword>
<keyword id="KW-0808">Transferase</keyword>
<keyword id="KW-0816">Tricarboxylic acid cycle</keyword>
<organism>
    <name type="scientific">Thermoplasma acidophilum (strain ATCC 25905 / DSM 1728 / JCM 9062 / NBRC 15155 / AMRC-C165)</name>
    <dbReference type="NCBI Taxonomy" id="273075"/>
    <lineage>
        <taxon>Archaea</taxon>
        <taxon>Methanobacteriati</taxon>
        <taxon>Thermoplasmatota</taxon>
        <taxon>Thermoplasmata</taxon>
        <taxon>Thermoplasmatales</taxon>
        <taxon>Thermoplasmataceae</taxon>
        <taxon>Thermoplasma</taxon>
    </lineage>
</organism>
<evidence type="ECO:0000255" key="1">
    <source>
        <dbReference type="PROSITE-ProRule" id="PRU10117"/>
    </source>
</evidence>
<evidence type="ECO:0000269" key="2">
    <source ref="3"/>
</evidence>
<evidence type="ECO:0000305" key="3"/>
<evidence type="ECO:0000305" key="4">
    <source>
    </source>
</evidence>
<evidence type="ECO:0007829" key="5">
    <source>
        <dbReference type="PDB" id="2IFC"/>
    </source>
</evidence>
<name>CISY_THEAC</name>
<gene>
    <name type="primary">gltA</name>
    <name type="ordered locus">Ta0169</name>
</gene>
<feature type="initiator methionine" description="Removed" evidence="2">
    <location>
        <position position="1"/>
    </location>
</feature>
<feature type="chain" id="PRO_0000169978" description="Citrate synthase">
    <location>
        <begin position="2"/>
        <end position="385"/>
    </location>
</feature>
<feature type="active site" evidence="4">
    <location>
        <position position="223"/>
    </location>
</feature>
<feature type="active site" evidence="4">
    <location>
        <position position="263"/>
    </location>
</feature>
<feature type="active site" evidence="4">
    <location>
        <position position="318"/>
    </location>
</feature>
<feature type="helix" evidence="5">
    <location>
        <begin position="9"/>
        <end position="11"/>
    </location>
</feature>
<feature type="strand" evidence="5">
    <location>
        <begin position="15"/>
        <end position="25"/>
    </location>
</feature>
<feature type="turn" evidence="5">
    <location>
        <begin position="26"/>
        <end position="29"/>
    </location>
</feature>
<feature type="strand" evidence="5">
    <location>
        <begin position="30"/>
        <end position="33"/>
    </location>
</feature>
<feature type="helix" evidence="5">
    <location>
        <begin position="38"/>
        <end position="43"/>
    </location>
</feature>
<feature type="helix" evidence="5">
    <location>
        <begin position="48"/>
        <end position="57"/>
    </location>
</feature>
<feature type="helix" evidence="5">
    <location>
        <begin position="63"/>
        <end position="74"/>
    </location>
</feature>
<feature type="helix" evidence="5">
    <location>
        <begin position="75"/>
        <end position="77"/>
    </location>
</feature>
<feature type="helix" evidence="5">
    <location>
        <begin position="81"/>
        <end position="88"/>
    </location>
</feature>
<feature type="helix" evidence="5">
    <location>
        <begin position="96"/>
        <end position="110"/>
    </location>
</feature>
<feature type="turn" evidence="5">
    <location>
        <begin position="118"/>
        <end position="120"/>
    </location>
</feature>
<feature type="helix" evidence="5">
    <location>
        <begin position="121"/>
        <end position="143"/>
    </location>
</feature>
<feature type="helix" evidence="5">
    <location>
        <begin position="157"/>
        <end position="166"/>
    </location>
</feature>
<feature type="helix" evidence="5">
    <location>
        <begin position="172"/>
        <end position="184"/>
    </location>
</feature>
<feature type="helix" evidence="5">
    <location>
        <begin position="192"/>
        <end position="201"/>
    </location>
</feature>
<feature type="turn" evidence="5">
    <location>
        <begin position="202"/>
        <end position="204"/>
    </location>
</feature>
<feature type="helix" evidence="5">
    <location>
        <begin position="207"/>
        <end position="218"/>
    </location>
</feature>
<feature type="turn" evidence="5">
    <location>
        <begin position="221"/>
        <end position="223"/>
    </location>
</feature>
<feature type="helix" evidence="5">
    <location>
        <begin position="226"/>
        <end position="237"/>
    </location>
</feature>
<feature type="helix" evidence="5">
    <location>
        <begin position="240"/>
        <end position="242"/>
    </location>
</feature>
<feature type="helix" evidence="5">
    <location>
        <begin position="243"/>
        <end position="250"/>
    </location>
</feature>
<feature type="turn" evidence="5">
    <location>
        <begin position="251"/>
        <end position="253"/>
    </location>
</feature>
<feature type="strand" evidence="5">
    <location>
        <begin position="254"/>
        <end position="256"/>
    </location>
</feature>
<feature type="helix" evidence="5">
    <location>
        <begin position="271"/>
        <end position="285"/>
    </location>
</feature>
<feature type="helix" evidence="5">
    <location>
        <begin position="288"/>
        <end position="308"/>
    </location>
</feature>
<feature type="helix" evidence="5">
    <location>
        <begin position="309"/>
        <end position="311"/>
    </location>
</feature>
<feature type="turn" evidence="5">
    <location>
        <begin position="317"/>
        <end position="320"/>
    </location>
</feature>
<feature type="helix" evidence="5">
    <location>
        <begin position="321"/>
        <end position="328"/>
    </location>
</feature>
<feature type="helix" evidence="5">
    <location>
        <begin position="333"/>
        <end position="335"/>
    </location>
</feature>
<feature type="helix" evidence="5">
    <location>
        <begin position="336"/>
        <end position="360"/>
    </location>
</feature>
<feature type="strand" evidence="5">
    <location>
        <begin position="367"/>
        <end position="370"/>
    </location>
</feature>
<feature type="helix" evidence="5">
    <location>
        <begin position="381"/>
        <end position="383"/>
    </location>
</feature>
<dbReference type="EC" id="2.3.3.16"/>
<dbReference type="EMBL" id="X55282">
    <property type="protein sequence ID" value="CAA38996.1"/>
    <property type="molecule type" value="Genomic_DNA"/>
</dbReference>
<dbReference type="EMBL" id="AL445063">
    <property type="protein sequence ID" value="CAC11315.1"/>
    <property type="molecule type" value="Genomic_DNA"/>
</dbReference>
<dbReference type="PIR" id="S13831">
    <property type="entry name" value="YKYT"/>
</dbReference>
<dbReference type="RefSeq" id="WP_010900596.1">
    <property type="nucleotide sequence ID" value="NC_002578.1"/>
</dbReference>
<dbReference type="PDB" id="2IFC">
    <property type="method" value="X-ray"/>
    <property type="resolution" value="1.70 A"/>
    <property type="chains" value="A/B/C/D=1-385"/>
</dbReference>
<dbReference type="PDB" id="2R26">
    <property type="method" value="X-ray"/>
    <property type="resolution" value="2.50 A"/>
    <property type="chains" value="A/B/C/D=2-385"/>
</dbReference>
<dbReference type="PDB" id="2R9E">
    <property type="method" value="X-ray"/>
    <property type="resolution" value="1.95 A"/>
    <property type="chains" value="A/B/C/D=1-385"/>
</dbReference>
<dbReference type="PDB" id="4YBO">
    <property type="method" value="X-ray"/>
    <property type="resolution" value="2.18 A"/>
    <property type="chains" value="A/B/C/D=2-385"/>
</dbReference>
<dbReference type="PDBsum" id="2IFC"/>
<dbReference type="PDBsum" id="2R26"/>
<dbReference type="PDBsum" id="2R9E"/>
<dbReference type="PDBsum" id="4YBO"/>
<dbReference type="SMR" id="P21553"/>
<dbReference type="FunCoup" id="P21553">
    <property type="interactions" value="183"/>
</dbReference>
<dbReference type="STRING" id="273075.gene:9571383"/>
<dbReference type="PaxDb" id="273075-Ta0169"/>
<dbReference type="EnsemblBacteria" id="CAC11315">
    <property type="protein sequence ID" value="CAC11315"/>
    <property type="gene ID" value="CAC11315"/>
</dbReference>
<dbReference type="KEGG" id="tac:Ta0169"/>
<dbReference type="eggNOG" id="arCOG04237">
    <property type="taxonomic scope" value="Archaea"/>
</dbReference>
<dbReference type="HOGENOM" id="CLU_025068_2_1_2"/>
<dbReference type="InParanoid" id="P21553"/>
<dbReference type="OrthoDB" id="21302at2157"/>
<dbReference type="BRENDA" id="2.3.3.16">
    <property type="organism ID" value="6324"/>
</dbReference>
<dbReference type="UniPathway" id="UPA00223">
    <property type="reaction ID" value="UER00717"/>
</dbReference>
<dbReference type="EvolutionaryTrace" id="P21553"/>
<dbReference type="Proteomes" id="UP000001024">
    <property type="component" value="Chromosome"/>
</dbReference>
<dbReference type="GO" id="GO:0005737">
    <property type="term" value="C:cytoplasm"/>
    <property type="evidence" value="ECO:0007669"/>
    <property type="project" value="InterPro"/>
</dbReference>
<dbReference type="GO" id="GO:0004108">
    <property type="term" value="F:citrate (Si)-synthase activity"/>
    <property type="evidence" value="ECO:0007669"/>
    <property type="project" value="TreeGrafter"/>
</dbReference>
<dbReference type="GO" id="GO:0005975">
    <property type="term" value="P:carbohydrate metabolic process"/>
    <property type="evidence" value="ECO:0007669"/>
    <property type="project" value="TreeGrafter"/>
</dbReference>
<dbReference type="GO" id="GO:0006099">
    <property type="term" value="P:tricarboxylic acid cycle"/>
    <property type="evidence" value="ECO:0007669"/>
    <property type="project" value="UniProtKB-UniPathway"/>
</dbReference>
<dbReference type="CDD" id="cd06118">
    <property type="entry name" value="citrate_synt_like_1"/>
    <property type="match status" value="1"/>
</dbReference>
<dbReference type="Gene3D" id="1.10.580.10">
    <property type="entry name" value="Citrate Synthase, domain 1"/>
    <property type="match status" value="1"/>
</dbReference>
<dbReference type="Gene3D" id="1.10.230.10">
    <property type="entry name" value="Cytochrome P450-Terp, domain 2"/>
    <property type="match status" value="1"/>
</dbReference>
<dbReference type="InterPro" id="IPR011278">
    <property type="entry name" value="2-MeCitrate/Citrate_synth_II"/>
</dbReference>
<dbReference type="InterPro" id="IPR054926">
    <property type="entry name" value="Cit_synThplmales"/>
</dbReference>
<dbReference type="InterPro" id="IPR016142">
    <property type="entry name" value="Citrate_synth-like_lrg_a-sub"/>
</dbReference>
<dbReference type="InterPro" id="IPR016143">
    <property type="entry name" value="Citrate_synth-like_sm_a-sub"/>
</dbReference>
<dbReference type="InterPro" id="IPR002020">
    <property type="entry name" value="Citrate_synthase"/>
</dbReference>
<dbReference type="InterPro" id="IPR019810">
    <property type="entry name" value="Citrate_synthase_AS"/>
</dbReference>
<dbReference type="InterPro" id="IPR024176">
    <property type="entry name" value="Citrate_synthase_bac-typ"/>
</dbReference>
<dbReference type="InterPro" id="IPR036969">
    <property type="entry name" value="Citrate_synthase_sf"/>
</dbReference>
<dbReference type="NCBIfam" id="TIGR01800">
    <property type="entry name" value="cit_synth_II"/>
    <property type="match status" value="1"/>
</dbReference>
<dbReference type="NCBIfam" id="NF041157">
    <property type="entry name" value="Cit_synThplmales"/>
    <property type="match status" value="1"/>
</dbReference>
<dbReference type="NCBIfam" id="NF010640">
    <property type="entry name" value="PRK14037.1"/>
    <property type="match status" value="1"/>
</dbReference>
<dbReference type="PANTHER" id="PTHR11739">
    <property type="entry name" value="CITRATE SYNTHASE"/>
    <property type="match status" value="1"/>
</dbReference>
<dbReference type="PANTHER" id="PTHR11739:SF4">
    <property type="entry name" value="CITRATE SYNTHASE, PEROXISOMAL"/>
    <property type="match status" value="1"/>
</dbReference>
<dbReference type="Pfam" id="PF00285">
    <property type="entry name" value="Citrate_synt"/>
    <property type="match status" value="1"/>
</dbReference>
<dbReference type="PIRSF" id="PIRSF001369">
    <property type="entry name" value="Citrate_synth"/>
    <property type="match status" value="1"/>
</dbReference>
<dbReference type="PRINTS" id="PR00143">
    <property type="entry name" value="CITRTSNTHASE"/>
</dbReference>
<dbReference type="SUPFAM" id="SSF48256">
    <property type="entry name" value="Citrate synthase"/>
    <property type="match status" value="1"/>
</dbReference>
<dbReference type="PROSITE" id="PS00480">
    <property type="entry name" value="CITRATE_SYNTHASE"/>
    <property type="match status" value="1"/>
</dbReference>
<protein>
    <recommendedName>
        <fullName>Citrate synthase</fullName>
        <ecNumber>2.3.3.16</ecNumber>
    </recommendedName>
</protein>
<accession>P21553</accession>